<name>USTP_ASPFN</name>
<comment type="function">
    <text evidence="3 4 5">Peptidase S41 family protein; part of the gene cluster that mediates the biosynthesis of the secondary metabolite ustiloxin B, an antimitotic tetrapeptide (PubMed:24841822, PubMed:26703898, PubMed:27166860). First, ustA is processed by the subtilisin-like endoprotease Kex2 that is outside the ustiloxin B gene cluster, at the C-terminal side of Arg-Lys, after transfer to Golgi apparatus through the endoplasmic reticulum (ER) (PubMed:24841822). Cleavage by KEX2 generates 16 peptides YAIG-I to YAIG-XVI (PubMed:24841822). To process the precursor peptide further, at least two peptidases are necessary to cleave the N-terminal and C-terminal sides of the Tyr-Ala-Ile-Gly core peptide which serves as backbone for the synthesis of ustiloxin B, through cyclization and modification of the tyrosine with a non-protein coding amino acid, norvaline (PubMed:24841822). One of the two peptidases must be the serine peptidase ustP; and the other pepdidase is probably ustH (PubMed:24841822). Macrocyclization of the core peptide derived from ustA requires the tyrosinase ustQ, as well as the homologous oxidases ustYa and ustYb, and leads to the production of the first cyclization product N-desmethylustiloxin F (PubMed:26703898, PubMed:27166860). For the formation of N-desmethylustiloxin F, three oxidation steps are required, hydroxylation at the benzylic position, hydroxylation at either the aromatic ring of Tyr or beta-position of Ile, and oxidative cyclization (PubMed:27166860). UstQ may catalyze the oxidation of a phenol moiety, whereas the ustYa and ustYb are most likely responsible for the remaining two-step oxidations (PubMed:27166860). N-desmethylustiloxin F is then methylated by ustM to yield ustiloxin F which in turn substrate of the cytochrome P450 monooxygenase ustC which catalyzes the formation of S-deoxyustiloxin H (PubMed:27166860). The flavoprotein monooxygenases ustF1 and ustF2 then participate in the modification of the side chain of S-deoxyustiloxin H, leading to the synthesis of an oxime intermediate, via ustiloxin H (PubMed:27166860). Finally, carboxylative dehydration performed by the cysteine desulfurase-like protein ustD yields ustiloxin B (PubMed:27166860).</text>
</comment>
<comment type="pathway">
    <text evidence="4">Mycotoxin biosynthesis.</text>
</comment>
<comment type="disruption phenotype">
    <text evidence="3 4">Impairs the production of ustiloxin B and its intermediate ustiloxin F (PubMed:24841822, PubMed:26703898).</text>
</comment>
<comment type="similarity">
    <text evidence="8">Belongs to the peptidase S41A family.</text>
</comment>
<proteinExistence type="evidence at protein level"/>
<accession>B8NM69</accession>
<organism>
    <name type="scientific">Aspergillus flavus (strain ATCC 200026 / FGSC A1120 / IAM 13836 / NRRL 3357 / JCM 12722 / SRRC 167)</name>
    <dbReference type="NCBI Taxonomy" id="332952"/>
    <lineage>
        <taxon>Eukaryota</taxon>
        <taxon>Fungi</taxon>
        <taxon>Dikarya</taxon>
        <taxon>Ascomycota</taxon>
        <taxon>Pezizomycotina</taxon>
        <taxon>Eurotiomycetes</taxon>
        <taxon>Eurotiomycetidae</taxon>
        <taxon>Eurotiales</taxon>
        <taxon>Aspergillaceae</taxon>
        <taxon>Aspergillus</taxon>
        <taxon>Aspergillus subgen. Circumdati</taxon>
    </lineage>
</organism>
<dbReference type="EC" id="3.4.-.-" evidence="9"/>
<dbReference type="EMBL" id="EQ963480">
    <property type="protein sequence ID" value="EED49420.1"/>
    <property type="molecule type" value="Genomic_DNA"/>
</dbReference>
<dbReference type="RefSeq" id="XP_002381321.1">
    <property type="nucleotide sequence ID" value="XM_002381280.1"/>
</dbReference>
<dbReference type="STRING" id="332952.B8NM69"/>
<dbReference type="EnsemblFungi" id="EED49420">
    <property type="protein sequence ID" value="EED49420"/>
    <property type="gene ID" value="AFLA_095010"/>
</dbReference>
<dbReference type="VEuPathDB" id="FungiDB:AFLA_009737"/>
<dbReference type="eggNOG" id="ENOG502S18W">
    <property type="taxonomic scope" value="Eukaryota"/>
</dbReference>
<dbReference type="HOGENOM" id="CLU_014251_1_1_1"/>
<dbReference type="OMA" id="STCAFFV"/>
<dbReference type="GO" id="GO:0008236">
    <property type="term" value="F:serine-type peptidase activity"/>
    <property type="evidence" value="ECO:0007669"/>
    <property type="project" value="UniProtKB-KW"/>
</dbReference>
<dbReference type="GO" id="GO:0006508">
    <property type="term" value="P:proteolysis"/>
    <property type="evidence" value="ECO:0007669"/>
    <property type="project" value="UniProtKB-KW"/>
</dbReference>
<dbReference type="Gene3D" id="3.90.226.10">
    <property type="entry name" value="2-enoyl-CoA Hydratase, Chain A, domain 1"/>
    <property type="match status" value="1"/>
</dbReference>
<dbReference type="InterPro" id="IPR029045">
    <property type="entry name" value="ClpP/crotonase-like_dom_sf"/>
</dbReference>
<dbReference type="InterPro" id="IPR056186">
    <property type="entry name" value="PDZ_CPAF-rel"/>
</dbReference>
<dbReference type="InterPro" id="IPR052766">
    <property type="entry name" value="S41A_metabolite_peptidase"/>
</dbReference>
<dbReference type="InterPro" id="IPR005151">
    <property type="entry name" value="Tail-specific_protease"/>
</dbReference>
<dbReference type="PANTHER" id="PTHR37049">
    <property type="entry name" value="PEPTIDASE S41 FAMILY PROTEIN"/>
    <property type="match status" value="1"/>
</dbReference>
<dbReference type="PANTHER" id="PTHR37049:SF4">
    <property type="entry name" value="RHODANESE DOMAIN-CONTAINING PROTEIN"/>
    <property type="match status" value="1"/>
</dbReference>
<dbReference type="Pfam" id="PF23658">
    <property type="entry name" value="PDZ_CPAF_rel"/>
    <property type="match status" value="1"/>
</dbReference>
<dbReference type="Pfam" id="PF03572">
    <property type="entry name" value="Peptidase_S41"/>
    <property type="match status" value="1"/>
</dbReference>
<dbReference type="SUPFAM" id="SSF52096">
    <property type="entry name" value="ClpP/crotonase"/>
    <property type="match status" value="1"/>
</dbReference>
<gene>
    <name evidence="7" type="primary">ustP</name>
    <name type="ORF">AFLA_095010</name>
</gene>
<reference key="1">
    <citation type="journal article" date="2015" name="Genome Announc.">
        <title>Genome sequence of Aspergillus flavus NRRL 3357, a strain that causes aflatoxin contamination of food and feed.</title>
        <authorList>
            <person name="Nierman W.C."/>
            <person name="Yu J."/>
            <person name="Fedorova-Abrams N.D."/>
            <person name="Losada L."/>
            <person name="Cleveland T.E."/>
            <person name="Bhatnagar D."/>
            <person name="Bennett J.W."/>
            <person name="Dean R."/>
            <person name="Payne G.A."/>
        </authorList>
    </citation>
    <scope>NUCLEOTIDE SEQUENCE [LARGE SCALE GENOMIC DNA]</scope>
    <source>
        <strain>ATCC 200026 / FGSC A1120 / IAM 13836 / NRRL 3357 / JCM 12722 / SRRC 167</strain>
    </source>
</reference>
<reference key="2">
    <citation type="journal article" date="2014" name="Fungal Genet. Biol.">
        <title>Characterization of the biosynthetic gene cluster for the ribosomally synthesized cyclic peptide ustiloxin B in Aspergillus flavus.</title>
        <authorList>
            <person name="Umemura M."/>
            <person name="Nagano N."/>
            <person name="Koike H."/>
            <person name="Kawano J."/>
            <person name="Ishii T."/>
            <person name="Miyamura Y."/>
            <person name="Kikuchi M."/>
            <person name="Tamano K."/>
            <person name="Yu J."/>
            <person name="Shin-ya K."/>
            <person name="Machida M."/>
        </authorList>
    </citation>
    <scope>FUNCTION</scope>
    <scope>DISRUPTION PHENOTYPE</scope>
    <scope>CATALYTIC ACTIVITY</scope>
</reference>
<reference key="3">
    <citation type="journal article" date="2016" name="Angew. Chem. Int. Ed.">
        <title>Unveiling the biosynthetic pathway of the ribosomally synthesized and post-translationally modified peptide ustiloxin B in filamentous fungi.</title>
        <authorList>
            <person name="Ye Y."/>
            <person name="Minami A."/>
            <person name="Igarashi Y."/>
            <person name="Izumikawa M."/>
            <person name="Umemura M."/>
            <person name="Nagano N."/>
            <person name="Machida M."/>
            <person name="Kawahara T."/>
            <person name="Shin-Ya K."/>
            <person name="Gomi K."/>
            <person name="Oikawa H."/>
        </authorList>
    </citation>
    <scope>FUNCTION</scope>
</reference>
<reference key="4">
    <citation type="journal article" date="2016" name="Fungal Genet. Biol.">
        <title>Class of cyclic ribosomal peptide synthetic genes in filamentous fungi.</title>
        <authorList>
            <person name="Nagano N."/>
            <person name="Umemura M."/>
            <person name="Izumikawa M."/>
            <person name="Kawano J."/>
            <person name="Ishii T."/>
            <person name="Kikuchi M."/>
            <person name="Tomii K."/>
            <person name="Kumagai T."/>
            <person name="Yoshimi A."/>
            <person name="Machida M."/>
            <person name="Abe K."/>
            <person name="Shin-ya K."/>
            <person name="Asai K."/>
        </authorList>
    </citation>
    <scope>FUNCTION</scope>
    <scope>DISRUPTION PHENOTYPE</scope>
</reference>
<sequence>MANVQSRYNHLFPSPAAAFSGMYTGGLWTNNLGSWPGKANQTVEFSNGTKMTVETTASVMLDRGLDFSSGESLFQTACMPNKKSRPPDPRPSLAVGKPPYSIPLGGPSMYPDPIIHHKKDFVRGYYLHEERLEDVAVLQLPTFRLIGESPVSLARVAVQFLERARKDGKEKLIIDLSNNMGGDINLGFNLFRILFPDKPIYTATRFPSTELIGLMGRVFSTSQGNEAVEHDNTLDLPLVFQNAVTPDHRHSFGSWEKLFGPVEIAGQNMSHLHATYNFTTASTEDNPISGYGGIEFGPSTQLFHAENIIIMTNGICASTCTILARLLKQQGVRSIVFGGRPRAAPMQLLGGSKGGQYWSLVTISHYIKKAREIAVNASGAGSPILSEDELARFLELAPPPLTGFPIRIDSRGGSGVNFRNEYDEKDPTTPLQFVYEAADCRLFWTAENYVFPESSWVAAADAMFGDASCVEESDGHHITP</sequence>
<feature type="chain" id="PRO_0000437296" description="Peptidase S41 family protein ustP">
    <location>
        <begin position="1"/>
        <end position="480"/>
    </location>
</feature>
<feature type="region of interest" description="Disordered" evidence="2">
    <location>
        <begin position="78"/>
        <end position="97"/>
    </location>
</feature>
<feature type="region of interest" description="Peptidase S41 domain" evidence="1">
    <location>
        <begin position="134"/>
        <end position="336"/>
    </location>
</feature>
<protein>
    <recommendedName>
        <fullName evidence="6">Peptidase S41 family protein ustP</fullName>
        <ecNumber evidence="9">3.4.-.-</ecNumber>
    </recommendedName>
    <alternativeName>
        <fullName evidence="6">Ustiloxin B biosynthesis protein P</fullName>
    </alternativeName>
</protein>
<keyword id="KW-0378">Hydrolase</keyword>
<keyword id="KW-0645">Protease</keyword>
<keyword id="KW-0720">Serine protease</keyword>
<evidence type="ECO:0000255" key="1"/>
<evidence type="ECO:0000256" key="2">
    <source>
        <dbReference type="SAM" id="MobiDB-lite"/>
    </source>
</evidence>
<evidence type="ECO:0000269" key="3">
    <source>
    </source>
</evidence>
<evidence type="ECO:0000269" key="4">
    <source>
    </source>
</evidence>
<evidence type="ECO:0000269" key="5">
    <source>
    </source>
</evidence>
<evidence type="ECO:0000303" key="6">
    <source>
    </source>
</evidence>
<evidence type="ECO:0000303" key="7">
    <source>
    </source>
</evidence>
<evidence type="ECO:0000305" key="8"/>
<evidence type="ECO:0000305" key="9">
    <source>
    </source>
</evidence>